<comment type="function">
    <text evidence="1">Channel that opens in response to stretch forces in the membrane lipid bilayer. May participate in the regulation of osmotic pressure changes within the cell.</text>
</comment>
<comment type="subunit">
    <text evidence="1">Homopentamer.</text>
</comment>
<comment type="subcellular location">
    <subcellularLocation>
        <location evidence="1">Cell inner membrane</location>
        <topology evidence="1">Multi-pass membrane protein</topology>
    </subcellularLocation>
</comment>
<comment type="similarity">
    <text evidence="1">Belongs to the MscL family.</text>
</comment>
<sequence length="138" mass="14899">MLKEFQEFALKGNMVDLAIGVIIGGAFGGLVNSIVNDIIMPIIGLITGGIDFSNMFIQLAGDPKTTLAAAREAGATIAYGNFITLLINFLIIAWVLFLVVKLMNRLKKREEAKPAPAAPSEEVLLTEIRDILAKQQKA</sequence>
<evidence type="ECO:0000255" key="1">
    <source>
        <dbReference type="HAMAP-Rule" id="MF_00115"/>
    </source>
</evidence>
<dbReference type="EMBL" id="CP000911">
    <property type="protein sequence ID" value="ABY37439.1"/>
    <property type="molecule type" value="Genomic_DNA"/>
</dbReference>
<dbReference type="RefSeq" id="WP_002963483.1">
    <property type="nucleotide sequence ID" value="NC_010169.1"/>
</dbReference>
<dbReference type="SMR" id="B0CJU8"/>
<dbReference type="GeneID" id="97534292"/>
<dbReference type="KEGG" id="bmt:BSUIS_A0347"/>
<dbReference type="HOGENOM" id="CLU_095787_0_1_5"/>
<dbReference type="Proteomes" id="UP000008545">
    <property type="component" value="Chromosome I"/>
</dbReference>
<dbReference type="GO" id="GO:0005886">
    <property type="term" value="C:plasma membrane"/>
    <property type="evidence" value="ECO:0007669"/>
    <property type="project" value="UniProtKB-SubCell"/>
</dbReference>
<dbReference type="GO" id="GO:0008381">
    <property type="term" value="F:mechanosensitive monoatomic ion channel activity"/>
    <property type="evidence" value="ECO:0007669"/>
    <property type="project" value="UniProtKB-UniRule"/>
</dbReference>
<dbReference type="Gene3D" id="1.10.1200.120">
    <property type="entry name" value="Large-conductance mechanosensitive channel, MscL, domain 1"/>
    <property type="match status" value="1"/>
</dbReference>
<dbReference type="HAMAP" id="MF_00115">
    <property type="entry name" value="MscL"/>
    <property type="match status" value="1"/>
</dbReference>
<dbReference type="InterPro" id="IPR019823">
    <property type="entry name" value="Mechanosensitive_channel_CS"/>
</dbReference>
<dbReference type="InterPro" id="IPR001185">
    <property type="entry name" value="MS_channel"/>
</dbReference>
<dbReference type="InterPro" id="IPR037673">
    <property type="entry name" value="MSC/AndL"/>
</dbReference>
<dbReference type="InterPro" id="IPR036019">
    <property type="entry name" value="MscL_channel"/>
</dbReference>
<dbReference type="NCBIfam" id="TIGR00220">
    <property type="entry name" value="mscL"/>
    <property type="match status" value="1"/>
</dbReference>
<dbReference type="NCBIfam" id="NF001843">
    <property type="entry name" value="PRK00567.1-4"/>
    <property type="match status" value="1"/>
</dbReference>
<dbReference type="NCBIfam" id="NF010557">
    <property type="entry name" value="PRK13952.1"/>
    <property type="match status" value="1"/>
</dbReference>
<dbReference type="PANTHER" id="PTHR30266:SF2">
    <property type="entry name" value="LARGE-CONDUCTANCE MECHANOSENSITIVE CHANNEL"/>
    <property type="match status" value="1"/>
</dbReference>
<dbReference type="PANTHER" id="PTHR30266">
    <property type="entry name" value="MECHANOSENSITIVE CHANNEL MSCL"/>
    <property type="match status" value="1"/>
</dbReference>
<dbReference type="Pfam" id="PF01741">
    <property type="entry name" value="MscL"/>
    <property type="match status" value="1"/>
</dbReference>
<dbReference type="PRINTS" id="PR01264">
    <property type="entry name" value="MECHCHANNEL"/>
</dbReference>
<dbReference type="SUPFAM" id="SSF81330">
    <property type="entry name" value="Gated mechanosensitive channel"/>
    <property type="match status" value="1"/>
</dbReference>
<dbReference type="PROSITE" id="PS01327">
    <property type="entry name" value="MSCL"/>
    <property type="match status" value="1"/>
</dbReference>
<proteinExistence type="inferred from homology"/>
<protein>
    <recommendedName>
        <fullName evidence="1">Large-conductance mechanosensitive channel</fullName>
    </recommendedName>
</protein>
<feature type="chain" id="PRO_1000076035" description="Large-conductance mechanosensitive channel">
    <location>
        <begin position="1"/>
        <end position="138"/>
    </location>
</feature>
<feature type="transmembrane region" description="Helical" evidence="1">
    <location>
        <begin position="15"/>
        <end position="35"/>
    </location>
</feature>
<feature type="transmembrane region" description="Helical" evidence="1">
    <location>
        <begin position="38"/>
        <end position="58"/>
    </location>
</feature>
<feature type="transmembrane region" description="Helical" evidence="1">
    <location>
        <begin position="80"/>
        <end position="100"/>
    </location>
</feature>
<name>MSCL_BRUSI</name>
<keyword id="KW-0997">Cell inner membrane</keyword>
<keyword id="KW-1003">Cell membrane</keyword>
<keyword id="KW-0407">Ion channel</keyword>
<keyword id="KW-0406">Ion transport</keyword>
<keyword id="KW-0472">Membrane</keyword>
<keyword id="KW-0812">Transmembrane</keyword>
<keyword id="KW-1133">Transmembrane helix</keyword>
<keyword id="KW-0813">Transport</keyword>
<accession>B0CJU8</accession>
<reference key="1">
    <citation type="submission" date="2007-12" db="EMBL/GenBank/DDBJ databases">
        <title>Brucella suis ATCC 23445 whole genome shotgun sequencing project.</title>
        <authorList>
            <person name="Setubal J.C."/>
            <person name="Bowns C."/>
            <person name="Boyle S."/>
            <person name="Crasta O.R."/>
            <person name="Czar M.J."/>
            <person name="Dharmanolla C."/>
            <person name="Gillespie J.J."/>
            <person name="Kenyon R.W."/>
            <person name="Lu J."/>
            <person name="Mane S."/>
            <person name="Mohapatra S."/>
            <person name="Nagrani S."/>
            <person name="Purkayastha A."/>
            <person name="Rajasimha H.K."/>
            <person name="Shallom J.M."/>
            <person name="Shallom S."/>
            <person name="Shukla M."/>
            <person name="Snyder E.E."/>
            <person name="Sobral B.W."/>
            <person name="Wattam A.R."/>
            <person name="Will R."/>
            <person name="Williams K."/>
            <person name="Yoo H."/>
            <person name="Bruce D."/>
            <person name="Detter C."/>
            <person name="Munk C."/>
            <person name="Brettin T.S."/>
        </authorList>
    </citation>
    <scope>NUCLEOTIDE SEQUENCE [LARGE SCALE GENOMIC DNA]</scope>
    <source>
        <strain>ATCC 23445 / NCTC 10510</strain>
    </source>
</reference>
<gene>
    <name evidence="1" type="primary">mscL</name>
    <name type="ordered locus">BSUIS_A0347</name>
</gene>
<organism>
    <name type="scientific">Brucella suis (strain ATCC 23445 / NCTC 10510)</name>
    <dbReference type="NCBI Taxonomy" id="470137"/>
    <lineage>
        <taxon>Bacteria</taxon>
        <taxon>Pseudomonadati</taxon>
        <taxon>Pseudomonadota</taxon>
        <taxon>Alphaproteobacteria</taxon>
        <taxon>Hyphomicrobiales</taxon>
        <taxon>Brucellaceae</taxon>
        <taxon>Brucella/Ochrobactrum group</taxon>
        <taxon>Brucella</taxon>
    </lineage>
</organism>